<accession>P9WHI1</accession>
<accession>L0TC39</accession>
<accession>O33280</accession>
<accession>P0A5U8</accession>
<sequence length="174" mass="19146">MTVSCPPPSTSEREEQARALCLRLLTARSRTRAELAGQLAKRGYPEDIGNRVLDRLAAVGLVDDTDFAEQWVQSRRANAAKSKRALAAELHAKGVDDDVITTVLGGIDAGAERGRAEKLVRARLRREVLIDDGTDEARVSRRLVAMLARRGYGQTLACEVVIAELAAERERRRV</sequence>
<reference key="1">
    <citation type="journal article" date="1998" name="Nature">
        <title>Deciphering the biology of Mycobacterium tuberculosis from the complete genome sequence.</title>
        <authorList>
            <person name="Cole S.T."/>
            <person name="Brosch R."/>
            <person name="Parkhill J."/>
            <person name="Garnier T."/>
            <person name="Churcher C.M."/>
            <person name="Harris D.E."/>
            <person name="Gordon S.V."/>
            <person name="Eiglmeier K."/>
            <person name="Gas S."/>
            <person name="Barry C.E. III"/>
            <person name="Tekaia F."/>
            <person name="Badcock K."/>
            <person name="Basham D."/>
            <person name="Brown D."/>
            <person name="Chillingworth T."/>
            <person name="Connor R."/>
            <person name="Davies R.M."/>
            <person name="Devlin K."/>
            <person name="Feltwell T."/>
            <person name="Gentles S."/>
            <person name="Hamlin N."/>
            <person name="Holroyd S."/>
            <person name="Hornsby T."/>
            <person name="Jagels K."/>
            <person name="Krogh A."/>
            <person name="McLean J."/>
            <person name="Moule S."/>
            <person name="Murphy L.D."/>
            <person name="Oliver S."/>
            <person name="Osborne J."/>
            <person name="Quail M.A."/>
            <person name="Rajandream M.A."/>
            <person name="Rogers J."/>
            <person name="Rutter S."/>
            <person name="Seeger K."/>
            <person name="Skelton S."/>
            <person name="Squares S."/>
            <person name="Squares R."/>
            <person name="Sulston J.E."/>
            <person name="Taylor K."/>
            <person name="Whitehead S."/>
            <person name="Barrell B.G."/>
        </authorList>
    </citation>
    <scope>NUCLEOTIDE SEQUENCE [LARGE SCALE GENOMIC DNA]</scope>
    <source>
        <strain>ATCC 25618 / H37Rv</strain>
    </source>
</reference>
<reference key="2">
    <citation type="journal article" date="2002" name="Proc. Natl. Acad. Sci. U.S.A.">
        <title>RecX protein abrogates ATP hydrolysis and strand exchange promoted by RecA: insights into negative regulation of homologous recombination.</title>
        <authorList>
            <person name="Venkatesh R."/>
            <person name="Ganesh N."/>
            <person name="Guhan N."/>
            <person name="Reddy M.S."/>
            <person name="Chandrasekhar T."/>
            <person name="Muniyappa K."/>
        </authorList>
    </citation>
    <scope>PROTEIN SEQUENCE OF 1-10</scope>
    <scope>FUNCTION</scope>
</reference>
<evidence type="ECO:0000269" key="1">
    <source>
    </source>
</evidence>
<evidence type="ECO:0000305" key="2"/>
<feature type="chain" id="PRO_0000162450" description="Regulatory protein RecX">
    <location>
        <begin position="1"/>
        <end position="174"/>
    </location>
</feature>
<proteinExistence type="evidence at protein level"/>
<keyword id="KW-0963">Cytoplasm</keyword>
<keyword id="KW-0903">Direct protein sequencing</keyword>
<keyword id="KW-1185">Reference proteome</keyword>
<comment type="function">
    <text evidence="1">Binds to RecA inhibiting ATP hydrolysis and the generation of heteroduplex DNA. It might act as an anti-recombinase to quell inappropriate recombinational repair during normal DNA metabolism. It is essential for cell survival.</text>
</comment>
<comment type="subcellular location">
    <subcellularLocation>
        <location evidence="2">Cytoplasm</location>
    </subcellularLocation>
</comment>
<comment type="similarity">
    <text evidence="2">Belongs to the RecX family.</text>
</comment>
<dbReference type="EMBL" id="AL123456">
    <property type="protein sequence ID" value="CCP45534.1"/>
    <property type="molecule type" value="Genomic_DNA"/>
</dbReference>
<dbReference type="PIR" id="G70877">
    <property type="entry name" value="G70877"/>
</dbReference>
<dbReference type="RefSeq" id="NP_217252.1">
    <property type="nucleotide sequence ID" value="NC_000962.3"/>
</dbReference>
<dbReference type="RefSeq" id="WP_003900562.1">
    <property type="nucleotide sequence ID" value="NZ_NVQJ01000017.1"/>
</dbReference>
<dbReference type="SMR" id="P9WHI1"/>
<dbReference type="STRING" id="83332.Rv2736c"/>
<dbReference type="PaxDb" id="83332-Rv2736c"/>
<dbReference type="GeneID" id="888393"/>
<dbReference type="KEGG" id="mtu:Rv2736c"/>
<dbReference type="KEGG" id="mtv:RVBD_2736c"/>
<dbReference type="TubercuList" id="Rv2736c"/>
<dbReference type="eggNOG" id="COG2137">
    <property type="taxonomic scope" value="Bacteria"/>
</dbReference>
<dbReference type="InParanoid" id="P9WHI1"/>
<dbReference type="OrthoDB" id="5244465at2"/>
<dbReference type="PhylomeDB" id="P9WHI1"/>
<dbReference type="Proteomes" id="UP000001584">
    <property type="component" value="Chromosome"/>
</dbReference>
<dbReference type="GO" id="GO:0005737">
    <property type="term" value="C:cytoplasm"/>
    <property type="evidence" value="ECO:0007669"/>
    <property type="project" value="UniProtKB-SubCell"/>
</dbReference>
<dbReference type="GO" id="GO:0005886">
    <property type="term" value="C:plasma membrane"/>
    <property type="evidence" value="ECO:0007005"/>
    <property type="project" value="MTBBASE"/>
</dbReference>
<dbReference type="GO" id="GO:0006282">
    <property type="term" value="P:regulation of DNA repair"/>
    <property type="evidence" value="ECO:0007669"/>
    <property type="project" value="UniProtKB-UniRule"/>
</dbReference>
<dbReference type="FunFam" id="1.10.10.10:FF:000656">
    <property type="entry name" value="Regulatory protein RecX"/>
    <property type="match status" value="1"/>
</dbReference>
<dbReference type="Gene3D" id="1.10.10.10">
    <property type="entry name" value="Winged helix-like DNA-binding domain superfamily/Winged helix DNA-binding domain"/>
    <property type="match status" value="2"/>
</dbReference>
<dbReference type="HAMAP" id="MF_01114">
    <property type="entry name" value="RecX"/>
    <property type="match status" value="1"/>
</dbReference>
<dbReference type="InterPro" id="IPR053926">
    <property type="entry name" value="RecX_HTH_1st"/>
</dbReference>
<dbReference type="InterPro" id="IPR053924">
    <property type="entry name" value="RecX_HTH_2nd"/>
</dbReference>
<dbReference type="InterPro" id="IPR003783">
    <property type="entry name" value="Regulatory_RecX"/>
</dbReference>
<dbReference type="InterPro" id="IPR036388">
    <property type="entry name" value="WH-like_DNA-bd_sf"/>
</dbReference>
<dbReference type="NCBIfam" id="NF001056">
    <property type="entry name" value="PRK00117.3-1"/>
    <property type="match status" value="1"/>
</dbReference>
<dbReference type="PANTHER" id="PTHR33602">
    <property type="entry name" value="REGULATORY PROTEIN RECX FAMILY PROTEIN"/>
    <property type="match status" value="1"/>
</dbReference>
<dbReference type="PANTHER" id="PTHR33602:SF1">
    <property type="entry name" value="REGULATORY PROTEIN RECX FAMILY PROTEIN"/>
    <property type="match status" value="1"/>
</dbReference>
<dbReference type="Pfam" id="PF21982">
    <property type="entry name" value="RecX_HTH1"/>
    <property type="match status" value="1"/>
</dbReference>
<dbReference type="Pfam" id="PF02631">
    <property type="entry name" value="RecX_HTH2"/>
    <property type="match status" value="1"/>
</dbReference>
<gene>
    <name type="primary">recX</name>
    <name type="ordered locus">Rv2736c</name>
    <name type="ORF">MTV002.01c</name>
</gene>
<name>RECX_MYCTU</name>
<organism>
    <name type="scientific">Mycobacterium tuberculosis (strain ATCC 25618 / H37Rv)</name>
    <dbReference type="NCBI Taxonomy" id="83332"/>
    <lineage>
        <taxon>Bacteria</taxon>
        <taxon>Bacillati</taxon>
        <taxon>Actinomycetota</taxon>
        <taxon>Actinomycetes</taxon>
        <taxon>Mycobacteriales</taxon>
        <taxon>Mycobacteriaceae</taxon>
        <taxon>Mycobacterium</taxon>
        <taxon>Mycobacterium tuberculosis complex</taxon>
    </lineage>
</organism>
<protein>
    <recommendedName>
        <fullName>Regulatory protein RecX</fullName>
    </recommendedName>
</protein>